<protein>
    <recommendedName>
        <fullName evidence="1">Deoxyribose-phosphate aldolase</fullName>
        <shortName evidence="1">DERA</shortName>
        <ecNumber evidence="1">4.1.2.4</ecNumber>
    </recommendedName>
    <alternativeName>
        <fullName evidence="1">2-deoxy-D-ribose 5-phosphate aldolase</fullName>
    </alternativeName>
    <alternativeName>
        <fullName evidence="1">Phosphodeoxyriboaldolase</fullName>
        <shortName evidence="1">Deoxyriboaldolase</shortName>
    </alternativeName>
</protein>
<reference key="1">
    <citation type="journal article" date="2002" name="Nucleic Acids Res.">
        <title>Genome sequence of Shigella flexneri 2a: insights into pathogenicity through comparison with genomes of Escherichia coli K12 and O157.</title>
        <authorList>
            <person name="Jin Q."/>
            <person name="Yuan Z."/>
            <person name="Xu J."/>
            <person name="Wang Y."/>
            <person name="Shen Y."/>
            <person name="Lu W."/>
            <person name="Wang J."/>
            <person name="Liu H."/>
            <person name="Yang J."/>
            <person name="Yang F."/>
            <person name="Zhang X."/>
            <person name="Zhang J."/>
            <person name="Yang G."/>
            <person name="Wu H."/>
            <person name="Qu D."/>
            <person name="Dong J."/>
            <person name="Sun L."/>
            <person name="Xue Y."/>
            <person name="Zhao A."/>
            <person name="Gao Y."/>
            <person name="Zhu J."/>
            <person name="Kan B."/>
            <person name="Ding K."/>
            <person name="Chen S."/>
            <person name="Cheng H."/>
            <person name="Yao Z."/>
            <person name="He B."/>
            <person name="Chen R."/>
            <person name="Ma D."/>
            <person name="Qiang B."/>
            <person name="Wen Y."/>
            <person name="Hou Y."/>
            <person name="Yu J."/>
        </authorList>
    </citation>
    <scope>NUCLEOTIDE SEQUENCE [LARGE SCALE GENOMIC DNA]</scope>
    <source>
        <strain>301 / Serotype 2a</strain>
    </source>
</reference>
<reference key="2">
    <citation type="journal article" date="2003" name="Infect. Immun.">
        <title>Complete genome sequence and comparative genomics of Shigella flexneri serotype 2a strain 2457T.</title>
        <authorList>
            <person name="Wei J."/>
            <person name="Goldberg M.B."/>
            <person name="Burland V."/>
            <person name="Venkatesan M.M."/>
            <person name="Deng W."/>
            <person name="Fournier G."/>
            <person name="Mayhew G.F."/>
            <person name="Plunkett G. III"/>
            <person name="Rose D.J."/>
            <person name="Darling A."/>
            <person name="Mau B."/>
            <person name="Perna N.T."/>
            <person name="Payne S.M."/>
            <person name="Runyen-Janecky L.J."/>
            <person name="Zhou S."/>
            <person name="Schwartz D.C."/>
            <person name="Blattner F.R."/>
        </authorList>
    </citation>
    <scope>NUCLEOTIDE SEQUENCE [LARGE SCALE GENOMIC DNA]</scope>
    <source>
        <strain>ATCC 700930 / 2457T / Serotype 2a</strain>
    </source>
</reference>
<comment type="function">
    <text evidence="1">Catalyzes a reversible aldol reaction between acetaldehyde and D-glyceraldehyde 3-phosphate to generate 2-deoxy-D-ribose 5-phosphate.</text>
</comment>
<comment type="catalytic activity">
    <reaction evidence="1">
        <text>2-deoxy-D-ribose 5-phosphate = D-glyceraldehyde 3-phosphate + acetaldehyde</text>
        <dbReference type="Rhea" id="RHEA:12821"/>
        <dbReference type="ChEBI" id="CHEBI:15343"/>
        <dbReference type="ChEBI" id="CHEBI:59776"/>
        <dbReference type="ChEBI" id="CHEBI:62877"/>
        <dbReference type="EC" id="4.1.2.4"/>
    </reaction>
</comment>
<comment type="pathway">
    <text evidence="1">Carbohydrate degradation; 2-deoxy-D-ribose 1-phosphate degradation; D-glyceraldehyde 3-phosphate and acetaldehyde from 2-deoxy-alpha-D-ribose 1-phosphate: step 2/2.</text>
</comment>
<comment type="subcellular location">
    <subcellularLocation>
        <location evidence="1">Cytoplasm</location>
    </subcellularLocation>
</comment>
<comment type="similarity">
    <text evidence="1">Belongs to the DeoC/FbaB aldolase family. DeoC type 2 subfamily.</text>
</comment>
<dbReference type="EC" id="4.1.2.4" evidence="1"/>
<dbReference type="EMBL" id="AE005674">
    <property type="protein sequence ID" value="AAN45828.2"/>
    <property type="molecule type" value="Genomic_DNA"/>
</dbReference>
<dbReference type="EMBL" id="AE014073">
    <property type="protein sequence ID" value="AAP19602.1"/>
    <property type="molecule type" value="Genomic_DNA"/>
</dbReference>
<dbReference type="RefSeq" id="NP_710121.2">
    <property type="nucleotide sequence ID" value="NC_004337.2"/>
</dbReference>
<dbReference type="RefSeq" id="WP_005053747.1">
    <property type="nucleotide sequence ID" value="NZ_WPGW01000013.1"/>
</dbReference>
<dbReference type="SMR" id="Q83P02"/>
<dbReference type="STRING" id="198214.SF4413"/>
<dbReference type="PaxDb" id="198214-SF4413"/>
<dbReference type="GeneID" id="1025052"/>
<dbReference type="KEGG" id="sfl:SF4413"/>
<dbReference type="KEGG" id="sfx:S4684"/>
<dbReference type="PATRIC" id="fig|198214.7.peg.5201"/>
<dbReference type="HOGENOM" id="CLU_053595_3_1_6"/>
<dbReference type="UniPathway" id="UPA00002">
    <property type="reaction ID" value="UER00468"/>
</dbReference>
<dbReference type="Proteomes" id="UP000001006">
    <property type="component" value="Chromosome"/>
</dbReference>
<dbReference type="Proteomes" id="UP000002673">
    <property type="component" value="Chromosome"/>
</dbReference>
<dbReference type="GO" id="GO:0005737">
    <property type="term" value="C:cytoplasm"/>
    <property type="evidence" value="ECO:0007669"/>
    <property type="project" value="UniProtKB-SubCell"/>
</dbReference>
<dbReference type="GO" id="GO:0004139">
    <property type="term" value="F:deoxyribose-phosphate aldolase activity"/>
    <property type="evidence" value="ECO:0007669"/>
    <property type="project" value="UniProtKB-UniRule"/>
</dbReference>
<dbReference type="GO" id="GO:0006018">
    <property type="term" value="P:2-deoxyribose 1-phosphate catabolic process"/>
    <property type="evidence" value="ECO:0007669"/>
    <property type="project" value="UniProtKB-UniRule"/>
</dbReference>
<dbReference type="GO" id="GO:0016052">
    <property type="term" value="P:carbohydrate catabolic process"/>
    <property type="evidence" value="ECO:0007669"/>
    <property type="project" value="TreeGrafter"/>
</dbReference>
<dbReference type="GO" id="GO:0009264">
    <property type="term" value="P:deoxyribonucleotide catabolic process"/>
    <property type="evidence" value="ECO:0007669"/>
    <property type="project" value="InterPro"/>
</dbReference>
<dbReference type="CDD" id="cd00959">
    <property type="entry name" value="DeoC"/>
    <property type="match status" value="1"/>
</dbReference>
<dbReference type="FunFam" id="3.20.20.70:FF:000034">
    <property type="entry name" value="Deoxyribose-phosphate aldolase"/>
    <property type="match status" value="1"/>
</dbReference>
<dbReference type="Gene3D" id="3.20.20.70">
    <property type="entry name" value="Aldolase class I"/>
    <property type="match status" value="1"/>
</dbReference>
<dbReference type="HAMAP" id="MF_00592">
    <property type="entry name" value="DeoC_type2"/>
    <property type="match status" value="1"/>
</dbReference>
<dbReference type="InterPro" id="IPR013785">
    <property type="entry name" value="Aldolase_TIM"/>
</dbReference>
<dbReference type="InterPro" id="IPR011343">
    <property type="entry name" value="DeoC"/>
</dbReference>
<dbReference type="InterPro" id="IPR002915">
    <property type="entry name" value="DeoC/FbaB/LacD_aldolase"/>
</dbReference>
<dbReference type="InterPro" id="IPR023649">
    <property type="entry name" value="DeoC_typeII"/>
</dbReference>
<dbReference type="NCBIfam" id="TIGR00126">
    <property type="entry name" value="deoC"/>
    <property type="match status" value="1"/>
</dbReference>
<dbReference type="PANTHER" id="PTHR10889">
    <property type="entry name" value="DEOXYRIBOSE-PHOSPHATE ALDOLASE"/>
    <property type="match status" value="1"/>
</dbReference>
<dbReference type="PANTHER" id="PTHR10889:SF3">
    <property type="entry name" value="DEOXYRIBOSE-PHOSPHATE ALDOLASE"/>
    <property type="match status" value="1"/>
</dbReference>
<dbReference type="Pfam" id="PF01791">
    <property type="entry name" value="DeoC"/>
    <property type="match status" value="1"/>
</dbReference>
<dbReference type="PIRSF" id="PIRSF001357">
    <property type="entry name" value="DeoC"/>
    <property type="match status" value="1"/>
</dbReference>
<dbReference type="SMART" id="SM01133">
    <property type="entry name" value="DeoC"/>
    <property type="match status" value="1"/>
</dbReference>
<dbReference type="SUPFAM" id="SSF51569">
    <property type="entry name" value="Aldolase"/>
    <property type="match status" value="1"/>
</dbReference>
<name>DEOC_SHIFL</name>
<accession>Q83P02</accession>
<accession>Q7UAI8</accession>
<sequence>MTDLKASSLRALKLMDLTTLNDDDTDEKVIALCHQAKTPVGNTAAICIYPRFIPIARKTLKEQGTPEIRIATVTNFPHGNDDIEIALAETRAAIAYGADEVDVVFPYRALMAGDEQVGFDLVKACKEACAAANVLLKVIIETGELKDEALIRKASEISIKAGADFIKTSTGKVAVNATPESARIMMEVIRDMGVEKTVGFKPAGGVRTAEDAQKYLAIADELFGADWADARHYRFGASSLLASLLKALGHGDGKSASSY</sequence>
<evidence type="ECO:0000255" key="1">
    <source>
        <dbReference type="HAMAP-Rule" id="MF_00592"/>
    </source>
</evidence>
<proteinExistence type="inferred from homology"/>
<feature type="chain" id="PRO_0000057304" description="Deoxyribose-phosphate aldolase">
    <location>
        <begin position="1"/>
        <end position="259"/>
    </location>
</feature>
<feature type="active site" description="Proton donor/acceptor" evidence="1">
    <location>
        <position position="102"/>
    </location>
</feature>
<feature type="active site" description="Schiff-base intermediate with acetaldehyde" evidence="1">
    <location>
        <position position="167"/>
    </location>
</feature>
<feature type="active site" description="Proton donor/acceptor" evidence="1">
    <location>
        <position position="201"/>
    </location>
</feature>
<keyword id="KW-0963">Cytoplasm</keyword>
<keyword id="KW-0456">Lyase</keyword>
<keyword id="KW-1185">Reference proteome</keyword>
<keyword id="KW-0704">Schiff base</keyword>
<gene>
    <name evidence="1" type="primary">deoC</name>
    <name type="ordered locus">SF4413</name>
    <name type="ordered locus">S4684</name>
</gene>
<organism>
    <name type="scientific">Shigella flexneri</name>
    <dbReference type="NCBI Taxonomy" id="623"/>
    <lineage>
        <taxon>Bacteria</taxon>
        <taxon>Pseudomonadati</taxon>
        <taxon>Pseudomonadota</taxon>
        <taxon>Gammaproteobacteria</taxon>
        <taxon>Enterobacterales</taxon>
        <taxon>Enterobacteriaceae</taxon>
        <taxon>Shigella</taxon>
    </lineage>
</organism>